<protein>
    <recommendedName>
        <fullName evidence="1">Large ribosomal subunit protein uL18</fullName>
    </recommendedName>
    <alternativeName>
        <fullName evidence="2">50S ribosomal protein L18</fullName>
    </alternativeName>
</protein>
<evidence type="ECO:0000255" key="1">
    <source>
        <dbReference type="HAMAP-Rule" id="MF_01337"/>
    </source>
</evidence>
<evidence type="ECO:0000305" key="2"/>
<comment type="function">
    <text evidence="1">This is one of the proteins that bind and probably mediate the attachment of the 5S RNA into the large ribosomal subunit, where it forms part of the central protuberance.</text>
</comment>
<comment type="subunit">
    <text evidence="1">Part of the 50S ribosomal subunit; part of the 5S rRNA/L5/L18/L25 subcomplex. Contacts the 5S and 23S rRNAs.</text>
</comment>
<comment type="similarity">
    <text evidence="1">Belongs to the universal ribosomal protein uL18 family.</text>
</comment>
<reference key="1">
    <citation type="journal article" date="2010" name="Genome Biol. Evol.">
        <title>Continuing evolution of Burkholderia mallei through genome reduction and large-scale rearrangements.</title>
        <authorList>
            <person name="Losada L."/>
            <person name="Ronning C.M."/>
            <person name="DeShazer D."/>
            <person name="Woods D."/>
            <person name="Fedorova N."/>
            <person name="Kim H.S."/>
            <person name="Shabalina S.A."/>
            <person name="Pearson T.R."/>
            <person name="Brinkac L."/>
            <person name="Tan P."/>
            <person name="Nandi T."/>
            <person name="Crabtree J."/>
            <person name="Badger J."/>
            <person name="Beckstrom-Sternberg S."/>
            <person name="Saqib M."/>
            <person name="Schutzer S.E."/>
            <person name="Keim P."/>
            <person name="Nierman W.C."/>
        </authorList>
    </citation>
    <scope>NUCLEOTIDE SEQUENCE [LARGE SCALE GENOMIC DNA]</scope>
    <source>
        <strain>1106a</strain>
    </source>
</reference>
<feature type="chain" id="PRO_1000053000" description="Large ribosomal subunit protein uL18">
    <location>
        <begin position="1"/>
        <end position="121"/>
    </location>
</feature>
<sequence>MDKTQSRLRRARQTRIKIAELQVARLAVHRTNTHIYAQVFSPCGTKVLASASTLEAEVRAQLADKSGKGGNVAAATLIGKRIAEKAKAAGIESVAFDRSGFRYHGRVKALAEAAREAGLKF</sequence>
<accession>A3P097</accession>
<name>RL18_BURP0</name>
<gene>
    <name evidence="1" type="primary">rplR</name>
    <name type="ordered locus">BURPS1106A_3788</name>
</gene>
<dbReference type="EMBL" id="CP000572">
    <property type="protein sequence ID" value="ABN91115.1"/>
    <property type="molecule type" value="Genomic_DNA"/>
</dbReference>
<dbReference type="RefSeq" id="WP_004197946.1">
    <property type="nucleotide sequence ID" value="NC_009076.1"/>
</dbReference>
<dbReference type="SMR" id="A3P097"/>
<dbReference type="GeneID" id="93061816"/>
<dbReference type="KEGG" id="bpl:BURPS1106A_3788"/>
<dbReference type="HOGENOM" id="CLU_098841_0_1_4"/>
<dbReference type="Proteomes" id="UP000006738">
    <property type="component" value="Chromosome I"/>
</dbReference>
<dbReference type="GO" id="GO:0022625">
    <property type="term" value="C:cytosolic large ribosomal subunit"/>
    <property type="evidence" value="ECO:0007669"/>
    <property type="project" value="TreeGrafter"/>
</dbReference>
<dbReference type="GO" id="GO:0008097">
    <property type="term" value="F:5S rRNA binding"/>
    <property type="evidence" value="ECO:0007669"/>
    <property type="project" value="TreeGrafter"/>
</dbReference>
<dbReference type="GO" id="GO:0003735">
    <property type="term" value="F:structural constituent of ribosome"/>
    <property type="evidence" value="ECO:0007669"/>
    <property type="project" value="InterPro"/>
</dbReference>
<dbReference type="GO" id="GO:0006412">
    <property type="term" value="P:translation"/>
    <property type="evidence" value="ECO:0007669"/>
    <property type="project" value="UniProtKB-UniRule"/>
</dbReference>
<dbReference type="CDD" id="cd00432">
    <property type="entry name" value="Ribosomal_L18_L5e"/>
    <property type="match status" value="1"/>
</dbReference>
<dbReference type="FunFam" id="3.30.420.100:FF:000001">
    <property type="entry name" value="50S ribosomal protein L18"/>
    <property type="match status" value="1"/>
</dbReference>
<dbReference type="Gene3D" id="3.30.420.100">
    <property type="match status" value="1"/>
</dbReference>
<dbReference type="HAMAP" id="MF_01337_B">
    <property type="entry name" value="Ribosomal_uL18_B"/>
    <property type="match status" value="1"/>
</dbReference>
<dbReference type="InterPro" id="IPR004389">
    <property type="entry name" value="Ribosomal_uL18_bac-type"/>
</dbReference>
<dbReference type="InterPro" id="IPR005484">
    <property type="entry name" value="Ribosomal_uL18_bac/euk"/>
</dbReference>
<dbReference type="NCBIfam" id="TIGR00060">
    <property type="entry name" value="L18_bact"/>
    <property type="match status" value="1"/>
</dbReference>
<dbReference type="PANTHER" id="PTHR12899">
    <property type="entry name" value="39S RIBOSOMAL PROTEIN L18, MITOCHONDRIAL"/>
    <property type="match status" value="1"/>
</dbReference>
<dbReference type="PANTHER" id="PTHR12899:SF3">
    <property type="entry name" value="LARGE RIBOSOMAL SUBUNIT PROTEIN UL18M"/>
    <property type="match status" value="1"/>
</dbReference>
<dbReference type="Pfam" id="PF00861">
    <property type="entry name" value="Ribosomal_L18p"/>
    <property type="match status" value="1"/>
</dbReference>
<dbReference type="SUPFAM" id="SSF53137">
    <property type="entry name" value="Translational machinery components"/>
    <property type="match status" value="1"/>
</dbReference>
<proteinExistence type="inferred from homology"/>
<keyword id="KW-0687">Ribonucleoprotein</keyword>
<keyword id="KW-0689">Ribosomal protein</keyword>
<keyword id="KW-0694">RNA-binding</keyword>
<keyword id="KW-0699">rRNA-binding</keyword>
<organism>
    <name type="scientific">Burkholderia pseudomallei (strain 1106a)</name>
    <dbReference type="NCBI Taxonomy" id="357348"/>
    <lineage>
        <taxon>Bacteria</taxon>
        <taxon>Pseudomonadati</taxon>
        <taxon>Pseudomonadota</taxon>
        <taxon>Betaproteobacteria</taxon>
        <taxon>Burkholderiales</taxon>
        <taxon>Burkholderiaceae</taxon>
        <taxon>Burkholderia</taxon>
        <taxon>pseudomallei group</taxon>
    </lineage>
</organism>